<evidence type="ECO:0000255" key="1">
    <source>
        <dbReference type="HAMAP-Rule" id="MF_01106"/>
    </source>
</evidence>
<evidence type="ECO:0000256" key="2">
    <source>
        <dbReference type="SAM" id="MobiDB-lite"/>
    </source>
</evidence>
<evidence type="ECO:0000305" key="3"/>
<gene>
    <name evidence="1" type="primary">argJ</name>
    <name type="synonym">attH</name>
</gene>
<accession>P96426</accession>
<accession>Q93JQ2</accession>
<name>ARGJ_RHOFA</name>
<feature type="chain" id="PRO_0000002227" description="Arginine biosynthesis bifunctional protein ArgJ alpha chain" evidence="1">
    <location>
        <begin position="1"/>
        <end position="193"/>
    </location>
</feature>
<feature type="chain" id="PRO_0000002228" description="Arginine biosynthesis bifunctional protein ArgJ beta chain" evidence="1">
    <location>
        <begin position="194"/>
        <end position="403"/>
    </location>
</feature>
<feature type="region of interest" description="Disordered" evidence="2">
    <location>
        <begin position="1"/>
        <end position="21"/>
    </location>
</feature>
<feature type="compositionally biased region" description="Polar residues" evidence="2">
    <location>
        <begin position="1"/>
        <end position="11"/>
    </location>
</feature>
<feature type="active site" description="Nucleophile" evidence="1">
    <location>
        <position position="194"/>
    </location>
</feature>
<feature type="binding site" evidence="1">
    <location>
        <position position="161"/>
    </location>
    <ligand>
        <name>substrate</name>
    </ligand>
</feature>
<feature type="binding site" evidence="1">
    <location>
        <position position="183"/>
    </location>
    <ligand>
        <name>substrate</name>
    </ligand>
</feature>
<feature type="binding site" evidence="1">
    <location>
        <position position="194"/>
    </location>
    <ligand>
        <name>substrate</name>
    </ligand>
</feature>
<feature type="binding site" evidence="1">
    <location>
        <position position="273"/>
    </location>
    <ligand>
        <name>substrate</name>
    </ligand>
</feature>
<feature type="binding site" evidence="1">
    <location>
        <position position="398"/>
    </location>
    <ligand>
        <name>substrate</name>
    </ligand>
</feature>
<feature type="binding site" evidence="1">
    <location>
        <position position="403"/>
    </location>
    <ligand>
        <name>substrate</name>
    </ligand>
</feature>
<feature type="site" description="Involved in the stabilization of negative charge on the oxyanion by the formation of the oxyanion hole" evidence="1">
    <location>
        <position position="125"/>
    </location>
</feature>
<feature type="site" description="Involved in the stabilization of negative charge on the oxyanion by the formation of the oxyanion hole" evidence="1">
    <location>
        <position position="126"/>
    </location>
</feature>
<feature type="site" description="Cleavage; by autolysis" evidence="1">
    <location>
        <begin position="193"/>
        <end position="194"/>
    </location>
</feature>
<dbReference type="EC" id="2.3.1.35" evidence="1"/>
<dbReference type="EC" id="2.3.1.1" evidence="1"/>
<dbReference type="EMBL" id="Y09820">
    <property type="protein sequence ID" value="CAA70949.1"/>
    <property type="molecule type" value="Genomic_DNA"/>
</dbReference>
<dbReference type="EMBL" id="AJ311775">
    <property type="protein sequence ID" value="CAC43342.1"/>
    <property type="status" value="ALT_INIT"/>
    <property type="molecule type" value="Genomic_DNA"/>
</dbReference>
<dbReference type="SMR" id="P96426"/>
<dbReference type="STRING" id="1443905.GCA_000761075_00044"/>
<dbReference type="eggNOG" id="COG1364">
    <property type="taxonomic scope" value="Bacteria"/>
</dbReference>
<dbReference type="UniPathway" id="UPA00068">
    <property type="reaction ID" value="UER00106"/>
</dbReference>
<dbReference type="UniPathway" id="UPA00068">
    <property type="reaction ID" value="UER00111"/>
</dbReference>
<dbReference type="GO" id="GO:0005737">
    <property type="term" value="C:cytoplasm"/>
    <property type="evidence" value="ECO:0007669"/>
    <property type="project" value="UniProtKB-SubCell"/>
</dbReference>
<dbReference type="GO" id="GO:0004358">
    <property type="term" value="F:glutamate N-acetyltransferase activity"/>
    <property type="evidence" value="ECO:0007669"/>
    <property type="project" value="UniProtKB-UniRule"/>
</dbReference>
<dbReference type="GO" id="GO:0004042">
    <property type="term" value="F:L-glutamate N-acetyltransferase activity"/>
    <property type="evidence" value="ECO:0007669"/>
    <property type="project" value="UniProtKB-UniRule"/>
</dbReference>
<dbReference type="GO" id="GO:0006526">
    <property type="term" value="P:L-arginine biosynthetic process"/>
    <property type="evidence" value="ECO:0007669"/>
    <property type="project" value="UniProtKB-UniRule"/>
</dbReference>
<dbReference type="GO" id="GO:0006592">
    <property type="term" value="P:ornithine biosynthetic process"/>
    <property type="evidence" value="ECO:0007669"/>
    <property type="project" value="TreeGrafter"/>
</dbReference>
<dbReference type="CDD" id="cd02152">
    <property type="entry name" value="OAT"/>
    <property type="match status" value="1"/>
</dbReference>
<dbReference type="FunFam" id="3.10.20.340:FF:000003">
    <property type="entry name" value="Arginine biosynthesis bifunctional protein ArgJ"/>
    <property type="match status" value="1"/>
</dbReference>
<dbReference type="Gene3D" id="3.10.20.340">
    <property type="entry name" value="ArgJ beta chain, C-terminal domain"/>
    <property type="match status" value="1"/>
</dbReference>
<dbReference type="Gene3D" id="3.60.70.12">
    <property type="entry name" value="L-amino peptidase D-ALA esterase/amidase"/>
    <property type="match status" value="1"/>
</dbReference>
<dbReference type="HAMAP" id="MF_01106">
    <property type="entry name" value="ArgJ"/>
    <property type="match status" value="1"/>
</dbReference>
<dbReference type="InterPro" id="IPR002813">
    <property type="entry name" value="Arg_biosynth_ArgJ"/>
</dbReference>
<dbReference type="InterPro" id="IPR016117">
    <property type="entry name" value="ArgJ-like_dom_sf"/>
</dbReference>
<dbReference type="InterPro" id="IPR042195">
    <property type="entry name" value="ArgJ_beta_C"/>
</dbReference>
<dbReference type="NCBIfam" id="TIGR00120">
    <property type="entry name" value="ArgJ"/>
    <property type="match status" value="1"/>
</dbReference>
<dbReference type="NCBIfam" id="NF003802">
    <property type="entry name" value="PRK05388.1"/>
    <property type="match status" value="1"/>
</dbReference>
<dbReference type="PANTHER" id="PTHR23100">
    <property type="entry name" value="ARGININE BIOSYNTHESIS BIFUNCTIONAL PROTEIN ARGJ"/>
    <property type="match status" value="1"/>
</dbReference>
<dbReference type="PANTHER" id="PTHR23100:SF0">
    <property type="entry name" value="ARGININE BIOSYNTHESIS BIFUNCTIONAL PROTEIN ARGJ, MITOCHONDRIAL"/>
    <property type="match status" value="1"/>
</dbReference>
<dbReference type="Pfam" id="PF01960">
    <property type="entry name" value="ArgJ"/>
    <property type="match status" value="1"/>
</dbReference>
<dbReference type="SUPFAM" id="SSF56266">
    <property type="entry name" value="DmpA/ArgJ-like"/>
    <property type="match status" value="1"/>
</dbReference>
<organism>
    <name type="scientific">Rhodococcoides fascians</name>
    <name type="common">Rhodococcus fascians</name>
    <dbReference type="NCBI Taxonomy" id="1828"/>
    <lineage>
        <taxon>Bacteria</taxon>
        <taxon>Bacillati</taxon>
        <taxon>Actinomycetota</taxon>
        <taxon>Actinomycetes</taxon>
        <taxon>Mycobacteriales</taxon>
        <taxon>Nocardiaceae</taxon>
        <taxon>Rhodococcoides</taxon>
    </lineage>
</organism>
<keyword id="KW-0012">Acyltransferase</keyword>
<keyword id="KW-0028">Amino-acid biosynthesis</keyword>
<keyword id="KW-0055">Arginine biosynthesis</keyword>
<keyword id="KW-0068">Autocatalytic cleavage</keyword>
<keyword id="KW-0963">Cytoplasm</keyword>
<keyword id="KW-0511">Multifunctional enzyme</keyword>
<keyword id="KW-0808">Transferase</keyword>
<protein>
    <recommendedName>
        <fullName evidence="1">Arginine biosynthesis bifunctional protein ArgJ</fullName>
    </recommendedName>
    <domain>
        <recommendedName>
            <fullName evidence="1">Glutamate N-acetyltransferase</fullName>
            <ecNumber evidence="1">2.3.1.35</ecNumber>
        </recommendedName>
        <alternativeName>
            <fullName evidence="1">Ornithine acetyltransferase</fullName>
            <shortName evidence="1">OATase</shortName>
        </alternativeName>
        <alternativeName>
            <fullName evidence="1">Ornithine transacetylase</fullName>
        </alternativeName>
    </domain>
    <domain>
        <recommendedName>
            <fullName evidence="1">Amino-acid acetyltransferase</fullName>
            <ecNumber evidence="1">2.3.1.1</ecNumber>
        </recommendedName>
        <alternativeName>
            <fullName evidence="1">N-acetylglutamate synthase</fullName>
            <shortName evidence="1">AGSase</shortName>
        </alternativeName>
    </domain>
    <component>
        <recommendedName>
            <fullName evidence="1">Arginine biosynthesis bifunctional protein ArgJ alpha chain</fullName>
        </recommendedName>
    </component>
    <component>
        <recommendedName>
            <fullName evidence="1">Arginine biosynthesis bifunctional protein ArgJ beta chain</fullName>
        </recommendedName>
    </component>
</protein>
<proteinExistence type="inferred from homology"/>
<comment type="function">
    <text evidence="1">Catalyzes two activities which are involved in the cyclic version of arginine biosynthesis: the synthesis of N-acetylglutamate from glutamate and acetyl-CoA as the acetyl donor, and of ornithine by transacetylation between N(2)-acetylornithine and glutamate.</text>
</comment>
<comment type="catalytic activity">
    <reaction evidence="1">
        <text>N(2)-acetyl-L-ornithine + L-glutamate = N-acetyl-L-glutamate + L-ornithine</text>
        <dbReference type="Rhea" id="RHEA:15349"/>
        <dbReference type="ChEBI" id="CHEBI:29985"/>
        <dbReference type="ChEBI" id="CHEBI:44337"/>
        <dbReference type="ChEBI" id="CHEBI:46911"/>
        <dbReference type="ChEBI" id="CHEBI:57805"/>
        <dbReference type="EC" id="2.3.1.35"/>
    </reaction>
</comment>
<comment type="catalytic activity">
    <reaction evidence="1">
        <text>L-glutamate + acetyl-CoA = N-acetyl-L-glutamate + CoA + H(+)</text>
        <dbReference type="Rhea" id="RHEA:24292"/>
        <dbReference type="ChEBI" id="CHEBI:15378"/>
        <dbReference type="ChEBI" id="CHEBI:29985"/>
        <dbReference type="ChEBI" id="CHEBI:44337"/>
        <dbReference type="ChEBI" id="CHEBI:57287"/>
        <dbReference type="ChEBI" id="CHEBI:57288"/>
        <dbReference type="EC" id="2.3.1.1"/>
    </reaction>
</comment>
<comment type="pathway">
    <text evidence="1">Amino-acid biosynthesis; L-arginine biosynthesis; L-ornithine and N-acetyl-L-glutamate from L-glutamate and N(2)-acetyl-L-ornithine (cyclic): step 1/1.</text>
</comment>
<comment type="pathway">
    <text evidence="1">Amino-acid biosynthesis; L-arginine biosynthesis; N(2)-acetyl-L-ornithine from L-glutamate: step 1/4.</text>
</comment>
<comment type="subunit">
    <text evidence="1">Heterotetramer of two alpha and two beta chains.</text>
</comment>
<comment type="subcellular location">
    <subcellularLocation>
        <location evidence="1">Cytoplasm</location>
    </subcellularLocation>
</comment>
<comment type="similarity">
    <text evidence="1">Belongs to the ArgJ family.</text>
</comment>
<comment type="sequence caution" evidence="3">
    <conflict type="erroneous initiation">
        <sequence resource="EMBL-CDS" id="CAC43342"/>
    </conflict>
    <text>Truncated N-terminus.</text>
</comment>
<sequence length="403" mass="42800">MVQSVLSSTSHGSERADMSAASPQGFHCWTTHLGLADEGKDDFSMVISDRPCTSSVVFTKSLFAGPCVTLSKTSIEQTSPRGVLVLAKNANVATGAEGLRNASEIRASVARTVGIEPDALIMASTGVIGVQYPMDTIRAGLDGLGQGTPLDAHAVARAIMTTDTRAKVSERAVGTSTIVGIAKGVGMIEPDMATMLSFVFTDADVPQDTLNRIFRDVVDRTYNSVSIDTDTSTSDTAAVFANGSAGPVPDTEFEQALEEVCTDLVKMIASDGEGATKLIVTTVSGASSERQARVVGKSIINSPLVKTMIHGEDPNWGRVLMAIGKCSNEVDIEPDRIRVAFADIDVYPSSSLDQHDTVEVVREHLATVTVEINVDLGIGTDTWRVFGCDLTDEYIRINADYTT</sequence>
<reference key="1">
    <citation type="journal article" date="2000" name="J. Bacteriol.">
        <title>Leafy gall formation is controlled by fasR, an AraC-type regulatory gene in Rhodococcus fascians.</title>
        <authorList>
            <person name="Temmerman W."/>
            <person name="Vereecke D."/>
            <person name="Dreesen R."/>
            <person name="Van Montagu M."/>
            <person name="Holsters M."/>
            <person name="Goethals K."/>
        </authorList>
    </citation>
    <scope>NUCLEOTIDE SEQUENCE [GENOMIC DNA]</scope>
    <source>
        <strain>D188</strain>
    </source>
</reference>
<reference key="2">
    <citation type="journal article" date="2001" name="Mol. Microbiol.">
        <title>The att locus of Rhodococcus fascians strain D188 is essential for full virulence on tobacco through the production of an autoregulatory compound.</title>
        <authorList>
            <person name="Maes T."/>
            <person name="Vereecke D."/>
            <person name="Ritsema T."/>
            <person name="Cornelis K."/>
            <person name="Thu H.N."/>
            <person name="Van Montagu M."/>
            <person name="Holsters M."/>
            <person name="Goethals K."/>
        </authorList>
    </citation>
    <scope>NUCLEOTIDE SEQUENCE [GENOMIC DNA]</scope>
    <source>
        <strain>D188</strain>
    </source>
</reference>